<organism>
    <name type="scientific">Clostridium beijerinckii (strain ATCC 51743 / NCIMB 8052)</name>
    <name type="common">Clostridium acetobutylicum</name>
    <dbReference type="NCBI Taxonomy" id="290402"/>
    <lineage>
        <taxon>Bacteria</taxon>
        <taxon>Bacillati</taxon>
        <taxon>Bacillota</taxon>
        <taxon>Clostridia</taxon>
        <taxon>Eubacteriales</taxon>
        <taxon>Clostridiaceae</taxon>
        <taxon>Clostridium</taxon>
    </lineage>
</organism>
<dbReference type="EC" id="4.2.99.-" evidence="1"/>
<dbReference type="EMBL" id="CP000721">
    <property type="protein sequence ID" value="ABR35734.1"/>
    <property type="molecule type" value="Genomic_DNA"/>
</dbReference>
<dbReference type="RefSeq" id="WP_012059784.1">
    <property type="nucleotide sequence ID" value="NC_009617.1"/>
</dbReference>
<dbReference type="SMR" id="A6LZF4"/>
<dbReference type="KEGG" id="cbe:Cbei_3614"/>
<dbReference type="eggNOG" id="COG4257">
    <property type="taxonomic scope" value="Bacteria"/>
</dbReference>
<dbReference type="HOGENOM" id="CLU_054751_1_0_9"/>
<dbReference type="Proteomes" id="UP000000565">
    <property type="component" value="Chromosome"/>
</dbReference>
<dbReference type="GO" id="GO:0016835">
    <property type="term" value="F:carbon-oxygen lyase activity"/>
    <property type="evidence" value="ECO:0007669"/>
    <property type="project" value="UniProtKB-UniRule"/>
</dbReference>
<dbReference type="GO" id="GO:0000287">
    <property type="term" value="F:magnesium ion binding"/>
    <property type="evidence" value="ECO:0007669"/>
    <property type="project" value="InterPro"/>
</dbReference>
<dbReference type="GO" id="GO:0017001">
    <property type="term" value="P:antibiotic catabolic process"/>
    <property type="evidence" value="ECO:0007669"/>
    <property type="project" value="UniProtKB-UniRule"/>
</dbReference>
<dbReference type="GO" id="GO:0046677">
    <property type="term" value="P:response to antibiotic"/>
    <property type="evidence" value="ECO:0007669"/>
    <property type="project" value="UniProtKB-KW"/>
</dbReference>
<dbReference type="Gene3D" id="2.130.10.10">
    <property type="entry name" value="YVTN repeat-like/Quinoprotein amine dehydrogenase"/>
    <property type="match status" value="1"/>
</dbReference>
<dbReference type="HAMAP" id="MF_01282">
    <property type="entry name" value="VirginiamycinB_lyase"/>
    <property type="match status" value="1"/>
</dbReference>
<dbReference type="InterPro" id="IPR011217">
    <property type="entry name" value="Streptogrm_lyase"/>
</dbReference>
<dbReference type="InterPro" id="IPR051344">
    <property type="entry name" value="Vgb"/>
</dbReference>
<dbReference type="InterPro" id="IPR015943">
    <property type="entry name" value="WD40/YVTN_repeat-like_dom_sf"/>
</dbReference>
<dbReference type="PANTHER" id="PTHR40274">
    <property type="entry name" value="VIRGINIAMYCIN B LYASE"/>
    <property type="match status" value="1"/>
</dbReference>
<dbReference type="PANTHER" id="PTHR40274:SF3">
    <property type="entry name" value="VIRGINIAMYCIN B LYASE"/>
    <property type="match status" value="1"/>
</dbReference>
<dbReference type="Pfam" id="PF24684">
    <property type="entry name" value="Vgb_lyase"/>
    <property type="match status" value="1"/>
</dbReference>
<dbReference type="PIRSF" id="PIRSF026412">
    <property type="entry name" value="Streptogrm_lyase"/>
    <property type="match status" value="1"/>
</dbReference>
<dbReference type="SUPFAM" id="SSF63829">
    <property type="entry name" value="Calcium-dependent phosphotriesterase"/>
    <property type="match status" value="1"/>
</dbReference>
<keyword id="KW-0046">Antibiotic resistance</keyword>
<keyword id="KW-0456">Lyase</keyword>
<keyword id="KW-0460">Magnesium</keyword>
<keyword id="KW-0479">Metal-binding</keyword>
<reference key="1">
    <citation type="submission" date="2007-06" db="EMBL/GenBank/DDBJ databases">
        <title>Complete sequence of Clostridium beijerinckii NCIMB 8052.</title>
        <authorList>
            <consortium name="US DOE Joint Genome Institute"/>
            <person name="Copeland A."/>
            <person name="Lucas S."/>
            <person name="Lapidus A."/>
            <person name="Barry K."/>
            <person name="Detter J.C."/>
            <person name="Glavina del Rio T."/>
            <person name="Hammon N."/>
            <person name="Israni S."/>
            <person name="Dalin E."/>
            <person name="Tice H."/>
            <person name="Pitluck S."/>
            <person name="Sims D."/>
            <person name="Brettin T."/>
            <person name="Bruce D."/>
            <person name="Tapia R."/>
            <person name="Brainard J."/>
            <person name="Schmutz J."/>
            <person name="Larimer F."/>
            <person name="Land M."/>
            <person name="Hauser L."/>
            <person name="Kyrpides N."/>
            <person name="Mikhailova N."/>
            <person name="Bennet G."/>
            <person name="Cann I."/>
            <person name="Chen J.-S."/>
            <person name="Contreras A.L."/>
            <person name="Jones D."/>
            <person name="Kashket E."/>
            <person name="Mitchell W."/>
            <person name="Stoddard S."/>
            <person name="Schwarz W."/>
            <person name="Qureshi N."/>
            <person name="Young M."/>
            <person name="Shi Z."/>
            <person name="Ezeji T."/>
            <person name="White B."/>
            <person name="Blaschek H."/>
            <person name="Richardson P."/>
        </authorList>
    </citation>
    <scope>NUCLEOTIDE SEQUENCE [LARGE SCALE GENOMIC DNA]</scope>
    <source>
        <strain>ATCC 51743 / NCIMB 8052</strain>
    </source>
</reference>
<accession>A6LZF4</accession>
<comment type="function">
    <text evidence="1">Inactivates the type B streptogramin antibiotics by linearizing the lactone ring at the ester linkage, generating a free phenylglycine carboxylate and converting the threonyl moiety into 2-amino-butenoic acid.</text>
</comment>
<comment type="cofactor">
    <cofactor evidence="1">
        <name>Mg(2+)</name>
        <dbReference type="ChEBI" id="CHEBI:18420"/>
    </cofactor>
</comment>
<comment type="subunit">
    <text evidence="1">Monomer.</text>
</comment>
<comment type="similarity">
    <text evidence="1">Belongs to the Vgb family.</text>
</comment>
<proteinExistence type="inferred from homology"/>
<name>VGB_CLOB8</name>
<feature type="chain" id="PRO_1000085896" description="Virginiamycin B lyase">
    <location>
        <begin position="1"/>
        <end position="295"/>
    </location>
</feature>
<feature type="active site" description="Proton acceptor" evidence="1">
    <location>
        <position position="270"/>
    </location>
</feature>
<feature type="binding site" evidence="1">
    <location>
        <position position="228"/>
    </location>
    <ligand>
        <name>substrate</name>
    </ligand>
</feature>
<feature type="binding site" evidence="1">
    <location>
        <position position="268"/>
    </location>
    <ligand>
        <name>Mg(2+)</name>
        <dbReference type="ChEBI" id="CHEBI:18420"/>
    </ligand>
</feature>
<feature type="binding site" evidence="1">
    <location>
        <position position="285"/>
    </location>
    <ligand>
        <name>Mg(2+)</name>
        <dbReference type="ChEBI" id="CHEBI:18420"/>
    </ligand>
</feature>
<sequence>MNIKINEYYIPTSLSGPYGITAGIDEALWFTENKANKIGRITVKGEIEEYLVPSQDAGLSIIVSGTNGDLWFSEYNANKIGKITIKGEIVEYSIPTADSGPFGITEGPDGAIWFTELTGNKIGRISNLGEVIEYKLPNDSSYPSSIVCGSDGVLWFTENQGNKIGKITMLGEITEYTIPTIGSGPVGITSGPDGALWFVEINGNRIGRITTEGIINEYDLKTVKARPHAIITGSDGALWFTQWGSNQIGRITTSGEVSEYEIPTANSEPHGIAVGPDKAIWFAEECNKIGQLILL</sequence>
<evidence type="ECO:0000255" key="1">
    <source>
        <dbReference type="HAMAP-Rule" id="MF_01282"/>
    </source>
</evidence>
<gene>
    <name evidence="1" type="primary">vgb</name>
    <name type="ordered locus">Cbei_3614</name>
</gene>
<protein>
    <recommendedName>
        <fullName evidence="1">Virginiamycin B lyase</fullName>
        <ecNumber evidence="1">4.2.99.-</ecNumber>
    </recommendedName>
    <alternativeName>
        <fullName evidence="1">Streptogramin B lyase</fullName>
    </alternativeName>
</protein>